<name>SSX1_HUMAN</name>
<sequence>MNGDDTFAKRPRDDAKASEKRSKAFDDIATYFSKKEWKKMKYSEKISYVYMKRNYKAMTKLGFKVTLPPFMCNKQATDFQGNDFDNDHNRRIQVEHPQMTFGRLHRIIPKIMPKKPAEDENDSKGVSEASGPQNDGKQLHPPGKANISEKINKRSGPKRGKHAWTHRLRERKQLVIYEEISDPEEDDE</sequence>
<feature type="chain" id="PRO_0000181828" description="Protein SSX1">
    <location>
        <begin position="1"/>
        <end position="188"/>
    </location>
</feature>
<feature type="domain" description="KRAB-related" evidence="1">
    <location>
        <begin position="20"/>
        <end position="83"/>
    </location>
</feature>
<feature type="region of interest" description="Disordered" evidence="2">
    <location>
        <begin position="1"/>
        <end position="22"/>
    </location>
</feature>
<feature type="region of interest" description="Disordered" evidence="2">
    <location>
        <begin position="111"/>
        <end position="188"/>
    </location>
</feature>
<feature type="compositionally biased region" description="Basic and acidic residues" evidence="2">
    <location>
        <begin position="115"/>
        <end position="125"/>
    </location>
</feature>
<feature type="compositionally biased region" description="Basic residues" evidence="2">
    <location>
        <begin position="153"/>
        <end position="170"/>
    </location>
</feature>
<feature type="compositionally biased region" description="Acidic residues" evidence="2">
    <location>
        <begin position="179"/>
        <end position="188"/>
    </location>
</feature>
<feature type="site" description="Breakpoint for translocation to form the SSXT-SSX1 fusion protein (rare)" evidence="4">
    <location>
        <begin position="62"/>
        <end position="63"/>
    </location>
</feature>
<feature type="site" description="Breakpoint for translocation to form the SSXT-SSX1 fusion protein" evidence="4">
    <location>
        <begin position="110"/>
        <end position="111"/>
    </location>
</feature>
<feature type="modified residue" description="Phosphoserine" evidence="6">
    <location>
        <position position="123"/>
    </location>
</feature>
<feature type="sequence variant" id="VAR_088251" description="In SPGFX5; uncertain significance; dbSNP:rs781822167." evidence="3">
    <original>Y</original>
    <variation>C</variation>
    <location>
        <position position="55"/>
    </location>
</feature>
<feature type="turn" evidence="7">
    <location>
        <begin position="165"/>
        <end position="167"/>
    </location>
</feature>
<keyword id="KW-0002">3D-structure</keyword>
<keyword id="KW-0966">Cell projection</keyword>
<keyword id="KW-0160">Chromosomal rearrangement</keyword>
<keyword id="KW-0969">Cilium</keyword>
<keyword id="KW-0963">Cytoplasm</keyword>
<keyword id="KW-0206">Cytoskeleton</keyword>
<keyword id="KW-0282">Flagellum</keyword>
<keyword id="KW-0597">Phosphoprotein</keyword>
<keyword id="KW-1267">Proteomics identification</keyword>
<keyword id="KW-0656">Proto-oncogene</keyword>
<keyword id="KW-1185">Reference proteome</keyword>
<keyword id="KW-0804">Transcription</keyword>
<keyword id="KW-0805">Transcription regulation</keyword>
<comment type="function">
    <text evidence="3 4">Could act as a modulator of transcription (PubMed:7539744). Plays a role in spermatogenesis (PubMed:36796361).</text>
</comment>
<comment type="interaction">
    <interactant intactId="EBI-10237585">
        <id>Q16384</id>
    </interactant>
    <interactant intactId="EBI-5278764">
        <id>Q96GN5</id>
        <label>CDCA7L</label>
    </interactant>
    <organismsDiffer>false</organismsDiffer>
    <experiments>3</experiments>
</comment>
<comment type="interaction">
    <interactant intactId="EBI-10237585">
        <id>Q16384</id>
    </interactant>
    <interactant intactId="EBI-5651487">
        <id>Q9UBF1</id>
        <label>MAGEC2</label>
    </interactant>
    <organismsDiffer>false</organismsDiffer>
    <experiments>3</experiments>
</comment>
<comment type="interaction">
    <interactant intactId="EBI-10237585">
        <id>Q16384</id>
    </interactant>
    <interactant intactId="EBI-11980301">
        <id>Q8N3F0</id>
        <label>MTURN</label>
    </interactant>
    <organismsDiffer>false</organismsDiffer>
    <experiments>3</experiments>
</comment>
<comment type="subcellular location">
    <subcellularLocation>
        <location evidence="3">Cytoplasm</location>
        <location evidence="3">Cytoskeleton</location>
        <location evidence="3">Flagellum axoneme</location>
    </subcellularLocation>
</comment>
<comment type="tissue specificity">
    <text evidence="3 4">Expressed at high level in the testis. Expressed at low level in thyroid. Not detected in tonsil, colon, lung, spleen, prostate, kidney, striated and smooth muscles. Detected in rhabdomyosarcoma and fibrosarcoma cell lines. Not detected in mesenchymal and epithelial cell lines (PubMed:7539744). Expressed in testis (PubMed:36796361).</text>
</comment>
<comment type="disease" evidence="3">
    <disease id="DI-06617">
        <name>Spermatogenic failure, X-linked, 5</name>
        <acronym>SPGFX5</acronym>
        <description>A male infertility disorder characterized by reduced progressive sperm motility and multiple morphologic sperm abnormalities, resulting in asthenoteratozoospermia.</description>
        <dbReference type="MIM" id="301099"/>
    </disease>
    <text>The disease may be caused by variants affecting the gene represented in this entry.</text>
</comment>
<comment type="disease">
    <text evidence="4">A chromosomal aberration involving SSX1 may be a cause of synovial sarcoma. Translocation t(X;18)(p11.2;q11.2). The translocation is specifically found in more than 80% of synovial sarcoma. The fusion products SSXT-SSX1 or SSXT-SSX2 are probably responsible for transforming activity. Heterogeneity in the position of the breakpoint can occur (low frequency).</text>
</comment>
<comment type="similarity">
    <text evidence="5">Belongs to the SSX family.</text>
</comment>
<dbReference type="EMBL" id="X86174">
    <property type="protein sequence ID" value="CAA60110.1"/>
    <property type="molecule type" value="mRNA"/>
</dbReference>
<dbReference type="EMBL" id="AL683817">
    <property type="protein sequence ID" value="CAI41141.1"/>
    <property type="molecule type" value="Genomic_DNA"/>
</dbReference>
<dbReference type="EMBL" id="BC001003">
    <property type="protein sequence ID" value="AAH01003.1"/>
    <property type="molecule type" value="mRNA"/>
</dbReference>
<dbReference type="EMBL" id="BC125151">
    <property type="protein sequence ID" value="AAI25152.1"/>
    <property type="molecule type" value="mRNA"/>
</dbReference>
<dbReference type="EMBL" id="BC128611">
    <property type="protein sequence ID" value="AAI28612.1"/>
    <property type="molecule type" value="mRNA"/>
</dbReference>
<dbReference type="EMBL" id="BC133693">
    <property type="protein sequence ID" value="AAI33694.1"/>
    <property type="molecule type" value="mRNA"/>
</dbReference>
<dbReference type="EMBL" id="BC150487">
    <property type="protein sequence ID" value="AAI50488.1"/>
    <property type="molecule type" value="mRNA"/>
</dbReference>
<dbReference type="EMBL" id="S79325">
    <property type="protein sequence ID" value="AAB35378.1"/>
    <property type="molecule type" value="mRNA"/>
</dbReference>
<dbReference type="CCDS" id="CCDS14290.1"/>
<dbReference type="PIR" id="S55057">
    <property type="entry name" value="S55057"/>
</dbReference>
<dbReference type="RefSeq" id="NP_001265620.1">
    <property type="nucleotide sequence ID" value="NM_001278691.2"/>
</dbReference>
<dbReference type="RefSeq" id="NP_005626.1">
    <property type="nucleotide sequence ID" value="NM_005635.4"/>
</dbReference>
<dbReference type="PDB" id="8HR1">
    <property type="method" value="EM"/>
    <property type="resolution" value="3.02 A"/>
    <property type="chains" value="S=162-175"/>
</dbReference>
<dbReference type="PDBsum" id="8HR1"/>
<dbReference type="EMDB" id="EMD-34956"/>
<dbReference type="SMR" id="Q16384"/>
<dbReference type="BioGRID" id="112634">
    <property type="interactions" value="13"/>
</dbReference>
<dbReference type="FunCoup" id="Q16384">
    <property type="interactions" value="25"/>
</dbReference>
<dbReference type="IntAct" id="Q16384">
    <property type="interactions" value="9"/>
</dbReference>
<dbReference type="STRING" id="9606.ENSP00000366118"/>
<dbReference type="iPTMnet" id="Q16384"/>
<dbReference type="PhosphoSitePlus" id="Q16384"/>
<dbReference type="BioMuta" id="SSX1"/>
<dbReference type="DMDM" id="3915027"/>
<dbReference type="MassIVE" id="Q16384"/>
<dbReference type="PaxDb" id="9606-ENSP00000366118"/>
<dbReference type="PeptideAtlas" id="Q16384"/>
<dbReference type="ProteomicsDB" id="60866"/>
<dbReference type="Pumba" id="Q16384"/>
<dbReference type="Antibodypedia" id="25598">
    <property type="antibodies" value="233 antibodies from 23 providers"/>
</dbReference>
<dbReference type="DNASU" id="6756"/>
<dbReference type="Ensembl" id="ENST00000376919.4">
    <property type="protein sequence ID" value="ENSP00000366118.3"/>
    <property type="gene ID" value="ENSG00000126752.8"/>
</dbReference>
<dbReference type="GeneID" id="6756"/>
<dbReference type="KEGG" id="hsa:6756"/>
<dbReference type="MANE-Select" id="ENST00000376919.4">
    <property type="protein sequence ID" value="ENSP00000366118.3"/>
    <property type="RefSeq nucleotide sequence ID" value="NM_005635.4"/>
    <property type="RefSeq protein sequence ID" value="NP_005626.1"/>
</dbReference>
<dbReference type="UCSC" id="uc004djb.2">
    <property type="organism name" value="human"/>
</dbReference>
<dbReference type="AGR" id="HGNC:11335"/>
<dbReference type="CTD" id="6756"/>
<dbReference type="DisGeNET" id="6756"/>
<dbReference type="GeneCards" id="SSX1"/>
<dbReference type="HGNC" id="HGNC:11335">
    <property type="gene designation" value="SSX1"/>
</dbReference>
<dbReference type="HPA" id="ENSG00000126752">
    <property type="expression patterns" value="Tissue enriched (testis)"/>
</dbReference>
<dbReference type="MalaCards" id="SSX1"/>
<dbReference type="MIM" id="301099">
    <property type="type" value="phenotype"/>
</dbReference>
<dbReference type="MIM" id="312820">
    <property type="type" value="gene+phenotype"/>
</dbReference>
<dbReference type="neXtProt" id="NX_Q16384"/>
<dbReference type="OpenTargets" id="ENSG00000126752"/>
<dbReference type="Orphanet" id="3273">
    <property type="disease" value="Synovial sarcoma"/>
</dbReference>
<dbReference type="PharmGKB" id="PA36159"/>
<dbReference type="VEuPathDB" id="HostDB:ENSG00000126752"/>
<dbReference type="eggNOG" id="ENOG502RU1A">
    <property type="taxonomic scope" value="Eukaryota"/>
</dbReference>
<dbReference type="GeneTree" id="ENSGT00390000012484"/>
<dbReference type="HOGENOM" id="CLU_097196_1_0_1"/>
<dbReference type="InParanoid" id="Q16384"/>
<dbReference type="OMA" id="PPAFMCP"/>
<dbReference type="OrthoDB" id="9802659at2759"/>
<dbReference type="PAN-GO" id="Q16384">
    <property type="GO annotations" value="1 GO annotation based on evolutionary models"/>
</dbReference>
<dbReference type="PhylomeDB" id="Q16384"/>
<dbReference type="TreeFam" id="TF338517"/>
<dbReference type="PathwayCommons" id="Q16384"/>
<dbReference type="SignaLink" id="Q16384"/>
<dbReference type="BioGRID-ORCS" id="6756">
    <property type="hits" value="52 hits in 709 CRISPR screens"/>
</dbReference>
<dbReference type="ChiTaRS" id="SSX1">
    <property type="organism name" value="human"/>
</dbReference>
<dbReference type="GeneWiki" id="SSX1"/>
<dbReference type="GenomeRNAi" id="6756"/>
<dbReference type="Pharos" id="Q16384">
    <property type="development level" value="Tbio"/>
</dbReference>
<dbReference type="PRO" id="PR:Q16384"/>
<dbReference type="Proteomes" id="UP000005640">
    <property type="component" value="Chromosome X"/>
</dbReference>
<dbReference type="RNAct" id="Q16384">
    <property type="molecule type" value="protein"/>
</dbReference>
<dbReference type="Bgee" id="ENSG00000126752">
    <property type="expression patterns" value="Expressed in primordial germ cell in gonad and 42 other cell types or tissues"/>
</dbReference>
<dbReference type="GO" id="GO:0005737">
    <property type="term" value="C:cytoplasm"/>
    <property type="evidence" value="ECO:0007669"/>
    <property type="project" value="UniProtKB-KW"/>
</dbReference>
<dbReference type="GO" id="GO:0005856">
    <property type="term" value="C:cytoskeleton"/>
    <property type="evidence" value="ECO:0007669"/>
    <property type="project" value="UniProtKB-KW"/>
</dbReference>
<dbReference type="GO" id="GO:0005634">
    <property type="term" value="C:nucleus"/>
    <property type="evidence" value="ECO:0000314"/>
    <property type="project" value="GO_Central"/>
</dbReference>
<dbReference type="GO" id="GO:0036126">
    <property type="term" value="C:sperm flagellum"/>
    <property type="evidence" value="ECO:0000315"/>
    <property type="project" value="UniProtKB"/>
</dbReference>
<dbReference type="GO" id="GO:0003714">
    <property type="term" value="F:transcription corepressor activity"/>
    <property type="evidence" value="ECO:0000315"/>
    <property type="project" value="GO_Central"/>
</dbReference>
<dbReference type="GO" id="GO:0000122">
    <property type="term" value="P:negative regulation of transcription by RNA polymerase II"/>
    <property type="evidence" value="ECO:0000314"/>
    <property type="project" value="ARUK-UCL"/>
</dbReference>
<dbReference type="GO" id="GO:0007283">
    <property type="term" value="P:spermatogenesis"/>
    <property type="evidence" value="ECO:0000315"/>
    <property type="project" value="UniProtKB"/>
</dbReference>
<dbReference type="InterPro" id="IPR003655">
    <property type="entry name" value="aKRAB"/>
</dbReference>
<dbReference type="InterPro" id="IPR001909">
    <property type="entry name" value="KRAB"/>
</dbReference>
<dbReference type="InterPro" id="IPR036051">
    <property type="entry name" value="KRAB_dom_sf"/>
</dbReference>
<dbReference type="InterPro" id="IPR019041">
    <property type="entry name" value="SSXRD_motif"/>
</dbReference>
<dbReference type="PANTHER" id="PTHR14112:SF26">
    <property type="entry name" value="PROTEIN SSX1"/>
    <property type="match status" value="1"/>
</dbReference>
<dbReference type="PANTHER" id="PTHR14112">
    <property type="entry name" value="SYNOVIAL SARCOMA, X MEMBER"/>
    <property type="match status" value="1"/>
</dbReference>
<dbReference type="Pfam" id="PF09514">
    <property type="entry name" value="SSXRD"/>
    <property type="match status" value="1"/>
</dbReference>
<dbReference type="SMART" id="SM00349">
    <property type="entry name" value="KRAB"/>
    <property type="match status" value="1"/>
</dbReference>
<dbReference type="SUPFAM" id="SSF109640">
    <property type="entry name" value="KRAB domain (Kruppel-associated box)"/>
    <property type="match status" value="1"/>
</dbReference>
<dbReference type="PROSITE" id="PS50806">
    <property type="entry name" value="KRAB_RELATED"/>
    <property type="match status" value="1"/>
</dbReference>
<protein>
    <recommendedName>
        <fullName>Protein SSX1</fullName>
    </recommendedName>
    <alternativeName>
        <fullName>Cancer/testis antigen 5.1</fullName>
        <shortName>CT5.1</shortName>
    </alternativeName>
    <alternativeName>
        <fullName>Synovial sarcoma, X breakpoint 1</fullName>
    </alternativeName>
</protein>
<accession>Q16384</accession>
<accession>A3KN76</accession>
<accession>Q08AJ2</accession>
<accession>Q5JQ64</accession>
<organism>
    <name type="scientific">Homo sapiens</name>
    <name type="common">Human</name>
    <dbReference type="NCBI Taxonomy" id="9606"/>
    <lineage>
        <taxon>Eukaryota</taxon>
        <taxon>Metazoa</taxon>
        <taxon>Chordata</taxon>
        <taxon>Craniata</taxon>
        <taxon>Vertebrata</taxon>
        <taxon>Euteleostomi</taxon>
        <taxon>Mammalia</taxon>
        <taxon>Eutheria</taxon>
        <taxon>Euarchontoglires</taxon>
        <taxon>Primates</taxon>
        <taxon>Haplorrhini</taxon>
        <taxon>Catarrhini</taxon>
        <taxon>Hominidae</taxon>
        <taxon>Homo</taxon>
    </lineage>
</organism>
<proteinExistence type="evidence at protein level"/>
<reference key="1">
    <citation type="journal article" date="1995" name="EMBO J.">
        <title>Fusion of SYT to two genes, SSX1 and SSX2, encoding proteins with homology to the Kruppel-associated box in human synovial sarcoma.</title>
        <authorList>
            <person name="Crew A.J."/>
            <person name="Clark J."/>
            <person name="Fisher C."/>
            <person name="Gill S."/>
            <person name="Grimer R."/>
            <person name="Chand A."/>
            <person name="Shipley J."/>
            <person name="Gusterson B.A."/>
            <person name="Cooper C.S."/>
        </authorList>
    </citation>
    <scope>NUCLEOTIDE SEQUENCE [MRNA]</scope>
    <scope>CHROMOSOMAL TRANSLOCATION WITH SS18</scope>
    <scope>FUNCTION</scope>
    <scope>TISSUE SPECIFICITY</scope>
    <source>
        <tissue>Fibrosarcoma</tissue>
    </source>
</reference>
<reference key="2">
    <citation type="journal article" date="2005" name="Nature">
        <title>The DNA sequence of the human X chromosome.</title>
        <authorList>
            <person name="Ross M.T."/>
            <person name="Grafham D.V."/>
            <person name="Coffey A.J."/>
            <person name="Scherer S."/>
            <person name="McLay K."/>
            <person name="Muzny D."/>
            <person name="Platzer M."/>
            <person name="Howell G.R."/>
            <person name="Burrows C."/>
            <person name="Bird C.P."/>
            <person name="Frankish A."/>
            <person name="Lovell F.L."/>
            <person name="Howe K.L."/>
            <person name="Ashurst J.L."/>
            <person name="Fulton R.S."/>
            <person name="Sudbrak R."/>
            <person name="Wen G."/>
            <person name="Jones M.C."/>
            <person name="Hurles M.E."/>
            <person name="Andrews T.D."/>
            <person name="Scott C.E."/>
            <person name="Searle S."/>
            <person name="Ramser J."/>
            <person name="Whittaker A."/>
            <person name="Deadman R."/>
            <person name="Carter N.P."/>
            <person name="Hunt S.E."/>
            <person name="Chen R."/>
            <person name="Cree A."/>
            <person name="Gunaratne P."/>
            <person name="Havlak P."/>
            <person name="Hodgson A."/>
            <person name="Metzker M.L."/>
            <person name="Richards S."/>
            <person name="Scott G."/>
            <person name="Steffen D."/>
            <person name="Sodergren E."/>
            <person name="Wheeler D.A."/>
            <person name="Worley K.C."/>
            <person name="Ainscough R."/>
            <person name="Ambrose K.D."/>
            <person name="Ansari-Lari M.A."/>
            <person name="Aradhya S."/>
            <person name="Ashwell R.I."/>
            <person name="Babbage A.K."/>
            <person name="Bagguley C.L."/>
            <person name="Ballabio A."/>
            <person name="Banerjee R."/>
            <person name="Barker G.E."/>
            <person name="Barlow K.F."/>
            <person name="Barrett I.P."/>
            <person name="Bates K.N."/>
            <person name="Beare D.M."/>
            <person name="Beasley H."/>
            <person name="Beasley O."/>
            <person name="Beck A."/>
            <person name="Bethel G."/>
            <person name="Blechschmidt K."/>
            <person name="Brady N."/>
            <person name="Bray-Allen S."/>
            <person name="Bridgeman A.M."/>
            <person name="Brown A.J."/>
            <person name="Brown M.J."/>
            <person name="Bonnin D."/>
            <person name="Bruford E.A."/>
            <person name="Buhay C."/>
            <person name="Burch P."/>
            <person name="Burford D."/>
            <person name="Burgess J."/>
            <person name="Burrill W."/>
            <person name="Burton J."/>
            <person name="Bye J.M."/>
            <person name="Carder C."/>
            <person name="Carrel L."/>
            <person name="Chako J."/>
            <person name="Chapman J.C."/>
            <person name="Chavez D."/>
            <person name="Chen E."/>
            <person name="Chen G."/>
            <person name="Chen Y."/>
            <person name="Chen Z."/>
            <person name="Chinault C."/>
            <person name="Ciccodicola A."/>
            <person name="Clark S.Y."/>
            <person name="Clarke G."/>
            <person name="Clee C.M."/>
            <person name="Clegg S."/>
            <person name="Clerc-Blankenburg K."/>
            <person name="Clifford K."/>
            <person name="Cobley V."/>
            <person name="Cole C.G."/>
            <person name="Conquer J.S."/>
            <person name="Corby N."/>
            <person name="Connor R.E."/>
            <person name="David R."/>
            <person name="Davies J."/>
            <person name="Davis C."/>
            <person name="Davis J."/>
            <person name="Delgado O."/>
            <person name="Deshazo D."/>
            <person name="Dhami P."/>
            <person name="Ding Y."/>
            <person name="Dinh H."/>
            <person name="Dodsworth S."/>
            <person name="Draper H."/>
            <person name="Dugan-Rocha S."/>
            <person name="Dunham A."/>
            <person name="Dunn M."/>
            <person name="Durbin K.J."/>
            <person name="Dutta I."/>
            <person name="Eades T."/>
            <person name="Ellwood M."/>
            <person name="Emery-Cohen A."/>
            <person name="Errington H."/>
            <person name="Evans K.L."/>
            <person name="Faulkner L."/>
            <person name="Francis F."/>
            <person name="Frankland J."/>
            <person name="Fraser A.E."/>
            <person name="Galgoczy P."/>
            <person name="Gilbert J."/>
            <person name="Gill R."/>
            <person name="Gloeckner G."/>
            <person name="Gregory S.G."/>
            <person name="Gribble S."/>
            <person name="Griffiths C."/>
            <person name="Grocock R."/>
            <person name="Gu Y."/>
            <person name="Gwilliam R."/>
            <person name="Hamilton C."/>
            <person name="Hart E.A."/>
            <person name="Hawes A."/>
            <person name="Heath P.D."/>
            <person name="Heitmann K."/>
            <person name="Hennig S."/>
            <person name="Hernandez J."/>
            <person name="Hinzmann B."/>
            <person name="Ho S."/>
            <person name="Hoffs M."/>
            <person name="Howden P.J."/>
            <person name="Huckle E.J."/>
            <person name="Hume J."/>
            <person name="Hunt P.J."/>
            <person name="Hunt A.R."/>
            <person name="Isherwood J."/>
            <person name="Jacob L."/>
            <person name="Johnson D."/>
            <person name="Jones S."/>
            <person name="de Jong P.J."/>
            <person name="Joseph S.S."/>
            <person name="Keenan S."/>
            <person name="Kelly S."/>
            <person name="Kershaw J.K."/>
            <person name="Khan Z."/>
            <person name="Kioschis P."/>
            <person name="Klages S."/>
            <person name="Knights A.J."/>
            <person name="Kosiura A."/>
            <person name="Kovar-Smith C."/>
            <person name="Laird G.K."/>
            <person name="Langford C."/>
            <person name="Lawlor S."/>
            <person name="Leversha M."/>
            <person name="Lewis L."/>
            <person name="Liu W."/>
            <person name="Lloyd C."/>
            <person name="Lloyd D.M."/>
            <person name="Loulseged H."/>
            <person name="Loveland J.E."/>
            <person name="Lovell J.D."/>
            <person name="Lozado R."/>
            <person name="Lu J."/>
            <person name="Lyne R."/>
            <person name="Ma J."/>
            <person name="Maheshwari M."/>
            <person name="Matthews L.H."/>
            <person name="McDowall J."/>
            <person name="McLaren S."/>
            <person name="McMurray A."/>
            <person name="Meidl P."/>
            <person name="Meitinger T."/>
            <person name="Milne S."/>
            <person name="Miner G."/>
            <person name="Mistry S.L."/>
            <person name="Morgan M."/>
            <person name="Morris S."/>
            <person name="Mueller I."/>
            <person name="Mullikin J.C."/>
            <person name="Nguyen N."/>
            <person name="Nordsiek G."/>
            <person name="Nyakatura G."/>
            <person name="O'dell C.N."/>
            <person name="Okwuonu G."/>
            <person name="Palmer S."/>
            <person name="Pandian R."/>
            <person name="Parker D."/>
            <person name="Parrish J."/>
            <person name="Pasternak S."/>
            <person name="Patel D."/>
            <person name="Pearce A.V."/>
            <person name="Pearson D.M."/>
            <person name="Pelan S.E."/>
            <person name="Perez L."/>
            <person name="Porter K.M."/>
            <person name="Ramsey Y."/>
            <person name="Reichwald K."/>
            <person name="Rhodes S."/>
            <person name="Ridler K.A."/>
            <person name="Schlessinger D."/>
            <person name="Schueler M.G."/>
            <person name="Sehra H.K."/>
            <person name="Shaw-Smith C."/>
            <person name="Shen H."/>
            <person name="Sheridan E.M."/>
            <person name="Shownkeen R."/>
            <person name="Skuce C.D."/>
            <person name="Smith M.L."/>
            <person name="Sotheran E.C."/>
            <person name="Steingruber H.E."/>
            <person name="Steward C.A."/>
            <person name="Storey R."/>
            <person name="Swann R.M."/>
            <person name="Swarbreck D."/>
            <person name="Tabor P.E."/>
            <person name="Taudien S."/>
            <person name="Taylor T."/>
            <person name="Teague B."/>
            <person name="Thomas K."/>
            <person name="Thorpe A."/>
            <person name="Timms K."/>
            <person name="Tracey A."/>
            <person name="Trevanion S."/>
            <person name="Tromans A.C."/>
            <person name="d'Urso M."/>
            <person name="Verduzco D."/>
            <person name="Villasana D."/>
            <person name="Waldron L."/>
            <person name="Wall M."/>
            <person name="Wang Q."/>
            <person name="Warren J."/>
            <person name="Warry G.L."/>
            <person name="Wei X."/>
            <person name="West A."/>
            <person name="Whitehead S.L."/>
            <person name="Whiteley M.N."/>
            <person name="Wilkinson J.E."/>
            <person name="Willey D.L."/>
            <person name="Williams G."/>
            <person name="Williams L."/>
            <person name="Williamson A."/>
            <person name="Williamson H."/>
            <person name="Wilming L."/>
            <person name="Woodmansey R.L."/>
            <person name="Wray P.W."/>
            <person name="Yen J."/>
            <person name="Zhang J."/>
            <person name="Zhou J."/>
            <person name="Zoghbi H."/>
            <person name="Zorilla S."/>
            <person name="Buck D."/>
            <person name="Reinhardt R."/>
            <person name="Poustka A."/>
            <person name="Rosenthal A."/>
            <person name="Lehrach H."/>
            <person name="Meindl A."/>
            <person name="Minx P.J."/>
            <person name="Hillier L.W."/>
            <person name="Willard H.F."/>
            <person name="Wilson R.K."/>
            <person name="Waterston R.H."/>
            <person name="Rice C.M."/>
            <person name="Vaudin M."/>
            <person name="Coulson A."/>
            <person name="Nelson D.L."/>
            <person name="Weinstock G."/>
            <person name="Sulston J.E."/>
            <person name="Durbin R.M."/>
            <person name="Hubbard T."/>
            <person name="Gibbs R.A."/>
            <person name="Beck S."/>
            <person name="Rogers J."/>
            <person name="Bentley D.R."/>
        </authorList>
    </citation>
    <scope>NUCLEOTIDE SEQUENCE [LARGE SCALE GENOMIC DNA]</scope>
</reference>
<reference key="3">
    <citation type="journal article" date="2004" name="Genome Res.">
        <title>The status, quality, and expansion of the NIH full-length cDNA project: the Mammalian Gene Collection (MGC).</title>
        <authorList>
            <consortium name="The MGC Project Team"/>
        </authorList>
    </citation>
    <scope>NUCLEOTIDE SEQUENCE [LARGE SCALE MRNA]</scope>
    <source>
        <tissue>Placenta</tissue>
        <tissue>Skin</tissue>
    </source>
</reference>
<reference key="4">
    <citation type="journal article" date="1995" name="Hum. Mol. Genet.">
        <title>Identification of two alternative fusion genes, SYT-SSX1 and SYT-SSX2, in t(X;18)(p11.2;q11.2)-positive synovial sarcomas.</title>
        <authorList>
            <person name="de Leeuw B."/>
            <person name="Balemans M."/>
            <person name="Olde Weghuis D."/>
            <person name="Geurts van Kessel A."/>
        </authorList>
    </citation>
    <scope>NUCLEOTIDE SEQUENCE [MRNA] OF 111-188</scope>
    <source>
        <tissue>Synovial sarcoma</tissue>
    </source>
</reference>
<reference key="5">
    <citation type="journal article" date="2013" name="J. Proteome Res.">
        <title>Toward a comprehensive characterization of a human cancer cell phosphoproteome.</title>
        <authorList>
            <person name="Zhou H."/>
            <person name="Di Palma S."/>
            <person name="Preisinger C."/>
            <person name="Peng M."/>
            <person name="Polat A.N."/>
            <person name="Heck A.J."/>
            <person name="Mohammed S."/>
        </authorList>
    </citation>
    <scope>PHOSPHORYLATION [LARGE SCALE ANALYSIS] AT SER-123</scope>
    <scope>IDENTIFICATION BY MASS SPECTROMETRY [LARGE SCALE ANALYSIS]</scope>
    <source>
        <tissue>Erythroleukemia</tissue>
    </source>
</reference>
<reference key="6">
    <citation type="journal article" date="2023" name="Am. J. Hum. Genet.">
        <title>Deficiency of primate-specific SSX1 induced asthenoteratozoospermia in infertile men and cynomolgus monkey and tree shrew models.</title>
        <authorList>
            <person name="Liu C."/>
            <person name="Si W."/>
            <person name="Tu C."/>
            <person name="Tian S."/>
            <person name="He X."/>
            <person name="Wang S."/>
            <person name="Yang X."/>
            <person name="Yao C."/>
            <person name="Li C."/>
            <person name="Kherraf Z.E."/>
            <person name="Ye M."/>
            <person name="Zhou Z."/>
            <person name="Ma Y."/>
            <person name="Gao Y."/>
            <person name="Li Y."/>
            <person name="Liu Q."/>
            <person name="Tang S."/>
            <person name="Wang J."/>
            <person name="Saiyin H."/>
            <person name="Zhao L."/>
            <person name="Yang L."/>
            <person name="Meng L."/>
            <person name="Chen B."/>
            <person name="Tang D."/>
            <person name="Zhou Y."/>
            <person name="Wu H."/>
            <person name="Lv M."/>
            <person name="Tan C."/>
            <person name="Lin G."/>
            <person name="Kong Q."/>
            <person name="Shi H."/>
            <person name="Su Z."/>
            <person name="Li Z."/>
            <person name="Yao Y.G."/>
            <person name="Jin L."/>
            <person name="Zheng P."/>
            <person name="Ray P.F."/>
            <person name="Tan Y.Q."/>
            <person name="Cao Y."/>
            <person name="Zhang F."/>
        </authorList>
    </citation>
    <scope>INVOLVEMENT IN SPGFX5</scope>
    <scope>VARIANT SPGFX5 CYS-55</scope>
    <scope>FUNCTION</scope>
    <scope>SUBCELLULAR LOCATION</scope>
    <scope>TISSUE SPECIFICITY</scope>
</reference>
<evidence type="ECO:0000255" key="1">
    <source>
        <dbReference type="PROSITE-ProRule" id="PRU00120"/>
    </source>
</evidence>
<evidence type="ECO:0000256" key="2">
    <source>
        <dbReference type="SAM" id="MobiDB-lite"/>
    </source>
</evidence>
<evidence type="ECO:0000269" key="3">
    <source>
    </source>
</evidence>
<evidence type="ECO:0000269" key="4">
    <source>
    </source>
</evidence>
<evidence type="ECO:0000305" key="5"/>
<evidence type="ECO:0007744" key="6">
    <source>
    </source>
</evidence>
<evidence type="ECO:0007829" key="7">
    <source>
        <dbReference type="PDB" id="8HR1"/>
    </source>
</evidence>
<gene>
    <name type="primary">SSX1</name>
</gene>